<keyword id="KW-0240">DNA-directed RNA polymerase</keyword>
<keyword id="KW-0548">Nucleotidyltransferase</keyword>
<keyword id="KW-0804">Transcription</keyword>
<keyword id="KW-0808">Transferase</keyword>
<keyword id="KW-1195">Viral transcription</keyword>
<organism>
    <name type="scientific">Enterobacteria phage K11</name>
    <name type="common">Bacteriophage K11</name>
    <dbReference type="NCBI Taxonomy" id="532077"/>
    <lineage>
        <taxon>Viruses</taxon>
        <taxon>Duplodnaviria</taxon>
        <taxon>Heunggongvirae</taxon>
        <taxon>Uroviricota</taxon>
        <taxon>Caudoviricetes</taxon>
        <taxon>Autographiviridae</taxon>
        <taxon>Studiervirinae</taxon>
        <taxon>Przondovirus</taxon>
        <taxon>Przondovirus K11</taxon>
    </lineage>
</organism>
<accession>P18147</accession>
<protein>
    <recommendedName>
        <fullName>DNA-directed RNA polymerase</fullName>
        <ecNumber evidence="4">2.7.7.6</ecNumber>
    </recommendedName>
</protein>
<reference key="1">
    <citation type="journal article" date="1990" name="Mol. Gen. Genet.">
        <title>The gene for Klebsiella bacteriophage K11 RNA polymerase: sequence and comparison with the homologous genes of phages T7, T3, and SP6.</title>
        <authorList>
            <person name="Dietz A."/>
            <person name="Weisser H.J."/>
            <person name="Koessel H."/>
            <person name="Hausmann R."/>
        </authorList>
    </citation>
    <scope>NUCLEOTIDE SEQUENCE [GENOMIC DNA]</scope>
</reference>
<reference key="2">
    <citation type="journal article" date="1999" name="Protein Expr. Purif.">
        <title>Soluble expression of cloned phage K11 RNA polymerase gene in Escherichia coli at a low temperature.</title>
        <authorList>
            <person name="Han K.G."/>
            <person name="Lee S.S."/>
            <person name="Kang C."/>
        </authorList>
    </citation>
    <scope>FUNCTION</scope>
    <scope>CATALYTIC ACTIVITY</scope>
</reference>
<evidence type="ECO:0000250" key="1"/>
<evidence type="ECO:0000255" key="2">
    <source>
        <dbReference type="PROSITE-ProRule" id="PRU10031"/>
    </source>
</evidence>
<evidence type="ECO:0000255" key="3">
    <source>
        <dbReference type="PROSITE-ProRule" id="PRU10032"/>
    </source>
</evidence>
<evidence type="ECO:0000269" key="4">
    <source>
    </source>
</evidence>
<evidence type="ECO:0000305" key="5"/>
<comment type="function">
    <text evidence="4">DNA-dependent RNA polymerase catalyzes the transcription of DNA into RNA using the four ribonucleoside triphosphates as substrates.</text>
</comment>
<comment type="catalytic activity">
    <reaction evidence="2 3 4">
        <text>RNA(n) + a ribonucleoside 5'-triphosphate = RNA(n+1) + diphosphate</text>
        <dbReference type="Rhea" id="RHEA:21248"/>
        <dbReference type="Rhea" id="RHEA-COMP:14527"/>
        <dbReference type="Rhea" id="RHEA-COMP:17342"/>
        <dbReference type="ChEBI" id="CHEBI:33019"/>
        <dbReference type="ChEBI" id="CHEBI:61557"/>
        <dbReference type="ChEBI" id="CHEBI:140395"/>
        <dbReference type="EC" id="2.7.7.6"/>
    </reaction>
</comment>
<comment type="similarity">
    <text evidence="5">Belongs to the phage and mitochondrial RNA polymerase family.</text>
</comment>
<feature type="chain" id="PRO_0000087747" description="DNA-directed RNA polymerase">
    <location>
        <begin position="1"/>
        <end position="906"/>
    </location>
</feature>
<feature type="active site" evidence="1">
    <location>
        <position position="560"/>
    </location>
</feature>
<feature type="active site" evidence="1">
    <location>
        <position position="654"/>
    </location>
</feature>
<feature type="active site" evidence="1">
    <location>
        <position position="835"/>
    </location>
</feature>
<dbReference type="EC" id="2.7.7.6" evidence="4"/>
<dbReference type="EMBL" id="X53238">
    <property type="protein sequence ID" value="CAA37330.1"/>
    <property type="molecule type" value="Genomic_DNA"/>
</dbReference>
<dbReference type="PIR" id="S10530">
    <property type="entry name" value="RNBPK1"/>
</dbReference>
<dbReference type="SMR" id="P18147"/>
<dbReference type="GO" id="GO:0000428">
    <property type="term" value="C:DNA-directed RNA polymerase complex"/>
    <property type="evidence" value="ECO:0007669"/>
    <property type="project" value="UniProtKB-KW"/>
</dbReference>
<dbReference type="GO" id="GO:0003677">
    <property type="term" value="F:DNA binding"/>
    <property type="evidence" value="ECO:0007669"/>
    <property type="project" value="InterPro"/>
</dbReference>
<dbReference type="GO" id="GO:0003899">
    <property type="term" value="F:DNA-directed RNA polymerase activity"/>
    <property type="evidence" value="ECO:0007669"/>
    <property type="project" value="UniProtKB-EC"/>
</dbReference>
<dbReference type="GO" id="GO:0006351">
    <property type="term" value="P:DNA-templated transcription"/>
    <property type="evidence" value="ECO:0007669"/>
    <property type="project" value="InterPro"/>
</dbReference>
<dbReference type="GO" id="GO:0019083">
    <property type="term" value="P:viral transcription"/>
    <property type="evidence" value="ECO:0007669"/>
    <property type="project" value="UniProtKB-KW"/>
</dbReference>
<dbReference type="Gene3D" id="1.10.287.260">
    <property type="match status" value="1"/>
</dbReference>
<dbReference type="Gene3D" id="1.10.287.280">
    <property type="match status" value="1"/>
</dbReference>
<dbReference type="Gene3D" id="1.10.150.20">
    <property type="entry name" value="5' to 3' exonuclease, C-terminal subdomain"/>
    <property type="match status" value="1"/>
</dbReference>
<dbReference type="Gene3D" id="1.10.1320.10">
    <property type="entry name" value="DNA-directed RNA polymerase, N-terminal domain"/>
    <property type="match status" value="1"/>
</dbReference>
<dbReference type="InterPro" id="IPR024075">
    <property type="entry name" value="DNA-dir_RNA_pol_helix_hairp_sf"/>
</dbReference>
<dbReference type="InterPro" id="IPR046950">
    <property type="entry name" value="DNA-dir_Rpol_C_phage-type"/>
</dbReference>
<dbReference type="InterPro" id="IPR002092">
    <property type="entry name" value="DNA-dir_Rpol_phage-type"/>
</dbReference>
<dbReference type="InterPro" id="IPR043502">
    <property type="entry name" value="DNA/RNA_pol_sf"/>
</dbReference>
<dbReference type="InterPro" id="IPR037159">
    <property type="entry name" value="RNA_POL_N_sf"/>
</dbReference>
<dbReference type="InterPro" id="IPR029262">
    <property type="entry name" value="RPOL_N"/>
</dbReference>
<dbReference type="PANTHER" id="PTHR10102">
    <property type="entry name" value="DNA-DIRECTED RNA POLYMERASE, MITOCHONDRIAL"/>
    <property type="match status" value="1"/>
</dbReference>
<dbReference type="PANTHER" id="PTHR10102:SF0">
    <property type="entry name" value="DNA-DIRECTED RNA POLYMERASE, MITOCHONDRIAL"/>
    <property type="match status" value="1"/>
</dbReference>
<dbReference type="Pfam" id="PF00940">
    <property type="entry name" value="RNA_pol"/>
    <property type="match status" value="1"/>
</dbReference>
<dbReference type="Pfam" id="PF14700">
    <property type="entry name" value="RPOL_N"/>
    <property type="match status" value="1"/>
</dbReference>
<dbReference type="SMART" id="SM01311">
    <property type="entry name" value="RPOL_N"/>
    <property type="match status" value="1"/>
</dbReference>
<dbReference type="SUPFAM" id="SSF56672">
    <property type="entry name" value="DNA/RNA polymerases"/>
    <property type="match status" value="1"/>
</dbReference>
<dbReference type="PROSITE" id="PS00900">
    <property type="entry name" value="RNA_POL_PHAGE_1"/>
    <property type="match status" value="1"/>
</dbReference>
<dbReference type="PROSITE" id="PS00489">
    <property type="entry name" value="RNA_POL_PHAGE_2"/>
    <property type="match status" value="1"/>
</dbReference>
<sequence length="906" mass="101128">MNALNIGRNDFSEIELAAIPYNILSEHYGDQAAREQLALEHEAYELGRQRFLKMLERQVKAGEFADNAAAKPLVLTLHPQLTKRIDDWKEEQANARGKKPRAYYPIKHGVASELAVSMGAEVLKEKRGVSSEAIALLTIKVVLGNAHRPLKGHNPAVSSQLGKALEDEARFGRIREQEAAYFKKNVADQLDKRVGHVYKKAFMQVVEADMISKGMLGGDNWASWKTDEQMHVGTKLLELLIEGTGLVEMTKNKMADGSDDVTSMQMVQLAPAFVELLSKRAGALAGISPMHQPCVVPPKPWVETVGGGYWSVGRRPLALVRTHSKKALRRYADVHMPEVYKAVNLAQNTPWKVNKKVLAVVNEIVNWKHCPVGDVPAIEREELPPRPDDIDTNEVARKAWRKEAAAVYRKDKARQSRRCRCEFMVAQANKFANHKAIWFPYNMDWRGRVYAVSMFNPQGNDMTKGSLTLAKGKPIGLDGFYWLKIHGANCAGVDKVPFPERIKFIEENEGNILASAADPLNNTWWTQQDSPFCFLAFCFEYAGVKHHGLNYNCSLPLAFDGSCSGIQHFSAMLRDSIGGRAVNLLPSDTVQDIYKIVADKVNEVLHQHAVNGSQTVVEQIADKETGEFHEKVTLGESVLAAQWLQYGVTRKVTKRSVMTLAYGSKESLVRQQVLEDTIQPAIDNGEGLMFTHPNQAAGYMAKLIWDAVTVTVVAAVEAMNWLKSAAKLLAAEVKDKKTKEVLRKRCAIHWVTPDGFPVWQEYRKQNQARLKLVFLGQANVKMTYNTGKDSEIDAHKQESGIAPNFVHSQDGSHLRMTVVHANEVYGIDSFALIHDSSGTIPADAGNLFKAVRETMVKTYEDNDVIADFYDQFADQLHESQLDKMPAVPAKGDLNLRDILESDFAFA</sequence>
<proteinExistence type="evidence at protein level"/>
<gene>
    <name type="primary">1</name>
</gene>
<organismHost>
    <name type="scientific">Klebsiella</name>
    <dbReference type="NCBI Taxonomy" id="570"/>
</organismHost>
<name>RPOL_BPK11</name>